<organism>
    <name type="scientific">Caenorhabditis elegans</name>
    <dbReference type="NCBI Taxonomy" id="6239"/>
    <lineage>
        <taxon>Eukaryota</taxon>
        <taxon>Metazoa</taxon>
        <taxon>Ecdysozoa</taxon>
        <taxon>Nematoda</taxon>
        <taxon>Chromadorea</taxon>
        <taxon>Rhabditida</taxon>
        <taxon>Rhabditina</taxon>
        <taxon>Rhabditomorpha</taxon>
        <taxon>Rhabditoidea</taxon>
        <taxon>Rhabditidae</taxon>
        <taxon>Peloderinae</taxon>
        <taxon>Caenorhabditis</taxon>
    </lineage>
</organism>
<name>PCP5_CAEEL</name>
<feature type="signal peptide" evidence="1">
    <location>
        <begin position="1"/>
        <end position="16"/>
    </location>
</feature>
<feature type="chain" id="PRO_0000027324" description="Prolyl carboxy peptidase like protein 5">
    <location>
        <begin position="17"/>
        <end position="507"/>
    </location>
</feature>
<feature type="active site" description="Charge relay system" evidence="1">
    <location>
        <position position="172"/>
    </location>
</feature>
<feature type="active site" description="Charge relay system" evidence="1">
    <location>
        <position position="439"/>
    </location>
</feature>
<feature type="active site" description="Charge relay system" evidence="1">
    <location>
        <position position="466"/>
    </location>
</feature>
<feature type="glycosylation site" description="N-linked (GlcNAc...) asparagine" evidence="2 3">
    <location>
        <position position="125"/>
    </location>
</feature>
<feature type="glycosylation site" description="N-linked (GlcNAc...) asparagine" evidence="3">
    <location>
        <position position="332"/>
    </location>
</feature>
<feature type="glycosylation site" description="N-linked (GlcNAc...) asparagine" evidence="1">
    <location>
        <position position="407"/>
    </location>
</feature>
<reference key="1">
    <citation type="journal article" date="1994" name="Nature">
        <title>2.2 Mb of contiguous nucleotide sequence from chromosome III of C. elegans.</title>
        <authorList>
            <person name="Wilson R."/>
            <person name="Ainscough R."/>
            <person name="Anderson K."/>
            <person name="Baynes C."/>
            <person name="Berks M."/>
            <person name="Bonfield J."/>
            <person name="Burton J."/>
            <person name="Connell M."/>
            <person name="Copsey T."/>
            <person name="Cooper J."/>
            <person name="Coulson A."/>
            <person name="Craxton M."/>
            <person name="Dear S."/>
            <person name="Du Z."/>
            <person name="Durbin R."/>
            <person name="Favello A."/>
            <person name="Fraser A."/>
            <person name="Fulton L."/>
            <person name="Gardner A."/>
            <person name="Green P."/>
            <person name="Hawkins T."/>
            <person name="Hillier L."/>
            <person name="Jier M."/>
            <person name="Johnston L."/>
            <person name="Jones M."/>
            <person name="Kershaw J."/>
            <person name="Kirsten J."/>
            <person name="Laisster N."/>
            <person name="Latreille P."/>
            <person name="Lightning J."/>
            <person name="Lloyd C."/>
            <person name="Mortimore B."/>
            <person name="O'Callaghan M."/>
            <person name="Parsons J."/>
            <person name="Percy C."/>
            <person name="Rifken L."/>
            <person name="Roopra A."/>
            <person name="Saunders D."/>
            <person name="Shownkeen R."/>
            <person name="Sims M."/>
            <person name="Smaldon N."/>
            <person name="Smith A."/>
            <person name="Smith M."/>
            <person name="Sonnhammer E."/>
            <person name="Staden R."/>
            <person name="Sulston J."/>
            <person name="Thierry-Mieg J."/>
            <person name="Thomas K."/>
            <person name="Vaudin M."/>
            <person name="Vaughan K."/>
            <person name="Waterston R."/>
            <person name="Watson A."/>
            <person name="Weinstock L."/>
            <person name="Wilkinson-Sproat J."/>
            <person name="Wohldman P."/>
        </authorList>
    </citation>
    <scope>NUCLEOTIDE SEQUENCE [LARGE SCALE GENOMIC DNA]</scope>
    <source>
        <strain>Bristol N2</strain>
    </source>
</reference>
<reference key="2">
    <citation type="journal article" date="1998" name="Science">
        <title>Genome sequence of the nematode C. elegans: a platform for investigating biology.</title>
        <authorList>
            <consortium name="The C. elegans sequencing consortium"/>
        </authorList>
    </citation>
    <scope>NUCLEOTIDE SEQUENCE [LARGE SCALE GENOMIC DNA]</scope>
    <scope>ALTERNATIVE SPLICING</scope>
    <source>
        <strain>Bristol N2</strain>
    </source>
</reference>
<reference key="3">
    <citation type="journal article" date="2003" name="Nat. Biotechnol.">
        <title>Lectin affinity capture, isotope-coded tagging and mass spectrometry to identify N-linked glycoproteins.</title>
        <authorList>
            <person name="Kaji H."/>
            <person name="Saito H."/>
            <person name="Yamauchi Y."/>
            <person name="Shinkawa T."/>
            <person name="Taoka M."/>
            <person name="Hirabayashi J."/>
            <person name="Kasai K."/>
            <person name="Takahashi N."/>
            <person name="Isobe T."/>
        </authorList>
    </citation>
    <scope>GLYCOSYLATION [LARGE SCALE ANALYSIS] AT ASN-125</scope>
    <scope>IDENTIFICATION BY MASS SPECTROMETRY</scope>
    <source>
        <strain>Bristol N2</strain>
    </source>
</reference>
<reference key="4">
    <citation type="journal article" date="2007" name="Mol. Cell. Proteomics">
        <title>Proteomics reveals N-linked glycoprotein diversity in Caenorhabditis elegans and suggests an atypical translocation mechanism for integral membrane proteins.</title>
        <authorList>
            <person name="Kaji H."/>
            <person name="Kamiie J."/>
            <person name="Kawakami H."/>
            <person name="Kido K."/>
            <person name="Yamauchi Y."/>
            <person name="Shinkawa T."/>
            <person name="Taoka M."/>
            <person name="Takahashi N."/>
            <person name="Isobe T."/>
        </authorList>
    </citation>
    <scope>GLYCOSYLATION [LARGE SCALE ANALYSIS] AT ASN-125 AND ASN-332</scope>
    <scope>IDENTIFICATION BY MASS SPECTROMETRY</scope>
    <source>
        <strain>Bristol N2</strain>
    </source>
</reference>
<gene>
    <name evidence="5" type="primary">pcp-5</name>
    <name evidence="5" type="synonym">tag-282</name>
    <name evidence="5" type="ORF">ZK688.6</name>
</gene>
<dbReference type="EC" id="3.4.-.-"/>
<dbReference type="EMBL" id="FO080277">
    <property type="protein sequence ID" value="CCD62538.1"/>
    <property type="molecule type" value="Genomic_DNA"/>
</dbReference>
<dbReference type="EMBL" id="FO080277">
    <property type="protein sequence ID" value="CCD62539.1"/>
    <property type="molecule type" value="Genomic_DNA"/>
</dbReference>
<dbReference type="PIR" id="S44916">
    <property type="entry name" value="S44916"/>
</dbReference>
<dbReference type="RefSeq" id="NP_498718.1">
    <property type="nucleotide sequence ID" value="NM_066317.1"/>
</dbReference>
<dbReference type="RefSeq" id="NP_498719.1">
    <property type="nucleotide sequence ID" value="NM_066318.4"/>
</dbReference>
<dbReference type="SMR" id="P34676"/>
<dbReference type="BioGRID" id="41318">
    <property type="interactions" value="3"/>
</dbReference>
<dbReference type="FunCoup" id="P34676">
    <property type="interactions" value="1980"/>
</dbReference>
<dbReference type="STRING" id="6239.ZK688.6b.1"/>
<dbReference type="ESTHER" id="caeel-PCP5">
    <property type="family name" value="Prolylcarboxypeptidase"/>
</dbReference>
<dbReference type="MEROPS" id="S28.A21"/>
<dbReference type="GlyCosmos" id="P34676">
    <property type="glycosylation" value="3 sites, No reported glycans"/>
</dbReference>
<dbReference type="iPTMnet" id="P34676"/>
<dbReference type="PaxDb" id="6239-ZK688.6b"/>
<dbReference type="PeptideAtlas" id="P34676"/>
<dbReference type="GeneID" id="176111"/>
<dbReference type="AGR" id="WB:WBGene00022801"/>
<dbReference type="WormBase" id="ZK688.6">
    <property type="protein sequence ID" value="CE00464"/>
    <property type="gene ID" value="WBGene00022801"/>
    <property type="gene designation" value="pcp-5"/>
</dbReference>
<dbReference type="eggNOG" id="KOG2183">
    <property type="taxonomic scope" value="Eukaryota"/>
</dbReference>
<dbReference type="GeneTree" id="ENSGT00940000158099"/>
<dbReference type="HOGENOM" id="CLU_020959_0_0_1"/>
<dbReference type="InParanoid" id="P34676"/>
<dbReference type="OMA" id="QTCNQMV"/>
<dbReference type="OrthoDB" id="2130629at2759"/>
<dbReference type="PhylomeDB" id="P34676"/>
<dbReference type="Reactome" id="R-CEL-6798695">
    <property type="pathway name" value="Neutrophil degranulation"/>
</dbReference>
<dbReference type="PRO" id="PR:P34676"/>
<dbReference type="Proteomes" id="UP000001940">
    <property type="component" value="Chromosome III"/>
</dbReference>
<dbReference type="Bgee" id="WBGene00022801">
    <property type="expression patterns" value="Expressed in embryo and 4 other cell types or tissues"/>
</dbReference>
<dbReference type="GO" id="GO:0008239">
    <property type="term" value="F:dipeptidyl-peptidase activity"/>
    <property type="evidence" value="ECO:0000318"/>
    <property type="project" value="GO_Central"/>
</dbReference>
<dbReference type="GO" id="GO:0070008">
    <property type="term" value="F:serine-type exopeptidase activity"/>
    <property type="evidence" value="ECO:0007669"/>
    <property type="project" value="InterPro"/>
</dbReference>
<dbReference type="GO" id="GO:0006508">
    <property type="term" value="P:proteolysis"/>
    <property type="evidence" value="ECO:0007669"/>
    <property type="project" value="UniProtKB-KW"/>
</dbReference>
<dbReference type="FunFam" id="1.20.120.980:FF:000007">
    <property type="entry name" value="Predicted protein"/>
    <property type="match status" value="1"/>
</dbReference>
<dbReference type="Gene3D" id="3.40.50.1820">
    <property type="entry name" value="alpha/beta hydrolase"/>
    <property type="match status" value="1"/>
</dbReference>
<dbReference type="Gene3D" id="1.20.120.980">
    <property type="entry name" value="Serine carboxypeptidase S28, SKS domain"/>
    <property type="match status" value="1"/>
</dbReference>
<dbReference type="InterPro" id="IPR029058">
    <property type="entry name" value="AB_hydrolase_fold"/>
</dbReference>
<dbReference type="InterPro" id="IPR008758">
    <property type="entry name" value="Peptidase_S28"/>
</dbReference>
<dbReference type="InterPro" id="IPR042269">
    <property type="entry name" value="Ser_carbopepase_S28_SKS"/>
</dbReference>
<dbReference type="PANTHER" id="PTHR11010:SF38">
    <property type="entry name" value="LYSOSOMAL PRO-X CARBOXYPEPTIDASE"/>
    <property type="match status" value="1"/>
</dbReference>
<dbReference type="PANTHER" id="PTHR11010">
    <property type="entry name" value="PROTEASE S28 PRO-X CARBOXYPEPTIDASE-RELATED"/>
    <property type="match status" value="1"/>
</dbReference>
<dbReference type="Pfam" id="PF05577">
    <property type="entry name" value="Peptidase_S28"/>
    <property type="match status" value="1"/>
</dbReference>
<dbReference type="SUPFAM" id="SSF53474">
    <property type="entry name" value="alpha/beta-Hydrolases"/>
    <property type="match status" value="1"/>
</dbReference>
<sequence>MNIFISLAILIATTHCLTLLRDPVTQNGASKFEKSIGKYKYEEGYLKAPIDPFAFTNDLEFDLRYFLNIDHYETGGPILFYTGNEGSLEAFAENTGFMWDLAPELKAAVVFVEHRFYGKSQPFKNESYTDIRHLGYLSSQQALADFALSVQFFKNEKIKGAQKSAVIAFGGSYGGMLSAWFRIKYPHIVDGAIAASAPVFWFTDSNIPEDVYDFIVTRAFLDAGCNRKAIEKGWIALDELAKSDSGRQYLNVLYKLDPKSKLENKDDIGFLKQYIRESMEAMAMVNYPYPTSFLSSLPAWPVKEACKSASQPGKTQEESAEQLYKIVNLYYNYTGDKSTHCANAAKCDSAYGSLGDPLGWPFQTCTEMVMPLCGSGYPNDFFWKDCPFTSEKYAEFCMQTFSSIHYNKTLLRPLAGGLAFGATSLPSASNIVFSNGYLDPWSGGGYDHSDKVQGSVISVILKQGAHHYDLRGAHPQDTEEVKKVRAMETQAIKKWIKEKARNSWRYD</sequence>
<comment type="similarity">
    <text evidence="4">Belongs to the peptidase S28 family.</text>
</comment>
<accession>P34676</accession>
<accession>Q95PW3</accession>
<protein>
    <recommendedName>
        <fullName>Prolyl carboxy peptidase like protein 5</fullName>
        <ecNumber>3.4.-.-</ecNumber>
    </recommendedName>
</protein>
<evidence type="ECO:0000255" key="1"/>
<evidence type="ECO:0000269" key="2">
    <source>
    </source>
</evidence>
<evidence type="ECO:0000269" key="3">
    <source>
    </source>
</evidence>
<evidence type="ECO:0000305" key="4"/>
<evidence type="ECO:0000312" key="5">
    <source>
        <dbReference type="WormBase" id="ZK688.6"/>
    </source>
</evidence>
<proteinExistence type="evidence at protein level"/>
<keyword id="KW-0325">Glycoprotein</keyword>
<keyword id="KW-0378">Hydrolase</keyword>
<keyword id="KW-0645">Protease</keyword>
<keyword id="KW-1185">Reference proteome</keyword>
<keyword id="KW-0720">Serine protease</keyword>
<keyword id="KW-0732">Signal</keyword>